<keyword id="KW-0456">Lyase</keyword>
<proteinExistence type="inferred from homology"/>
<evidence type="ECO:0000255" key="1">
    <source>
        <dbReference type="HAMAP-Rule" id="MF_00434"/>
    </source>
</evidence>
<sequence length="118" mass="13118">MSTLNQAHCEACRADAPQVSEAELPELLKQIPDWNIEVRDGVMQLEKVFLFKNFKFALAFTNAVGEIAEAEGHHPGLLTEWGKVTVTWWSHSIKGLHRNDFIMAARTDGVASGAEGRK</sequence>
<dbReference type="EC" id="4.2.1.96" evidence="1"/>
<dbReference type="EMBL" id="CP000058">
    <property type="protein sequence ID" value="AAZ35428.1"/>
    <property type="molecule type" value="Genomic_DNA"/>
</dbReference>
<dbReference type="RefSeq" id="WP_004659699.1">
    <property type="nucleotide sequence ID" value="NC_005773.3"/>
</dbReference>
<dbReference type="SMR" id="Q48G05"/>
<dbReference type="KEGG" id="psp:PSPPH_3532"/>
<dbReference type="eggNOG" id="COG2154">
    <property type="taxonomic scope" value="Bacteria"/>
</dbReference>
<dbReference type="HOGENOM" id="CLU_081974_2_2_6"/>
<dbReference type="BRENDA" id="4.2.1.96">
    <property type="organism ID" value="5193"/>
</dbReference>
<dbReference type="Proteomes" id="UP000000551">
    <property type="component" value="Chromosome"/>
</dbReference>
<dbReference type="GO" id="GO:0008124">
    <property type="term" value="F:4-alpha-hydroxytetrahydrobiopterin dehydratase activity"/>
    <property type="evidence" value="ECO:0007669"/>
    <property type="project" value="UniProtKB-UniRule"/>
</dbReference>
<dbReference type="GO" id="GO:0006729">
    <property type="term" value="P:tetrahydrobiopterin biosynthetic process"/>
    <property type="evidence" value="ECO:0007669"/>
    <property type="project" value="InterPro"/>
</dbReference>
<dbReference type="CDD" id="cd00913">
    <property type="entry name" value="PCD_DCoH_subfamily_a"/>
    <property type="match status" value="1"/>
</dbReference>
<dbReference type="Gene3D" id="3.30.1360.20">
    <property type="entry name" value="Transcriptional coactivator/pterin dehydratase"/>
    <property type="match status" value="1"/>
</dbReference>
<dbReference type="HAMAP" id="MF_00434">
    <property type="entry name" value="Pterin_4_alpha"/>
    <property type="match status" value="1"/>
</dbReference>
<dbReference type="InterPro" id="IPR036428">
    <property type="entry name" value="PCD_sf"/>
</dbReference>
<dbReference type="InterPro" id="IPR050376">
    <property type="entry name" value="Pterin-4-alpha-carb_dehyd"/>
</dbReference>
<dbReference type="InterPro" id="IPR001533">
    <property type="entry name" value="Pterin_deHydtase"/>
</dbReference>
<dbReference type="NCBIfam" id="NF002016">
    <property type="entry name" value="PRK00823.1-1"/>
    <property type="match status" value="1"/>
</dbReference>
<dbReference type="PANTHER" id="PTHR42805">
    <property type="entry name" value="PTERIN-4-ALPHA-CARBINOLAMINE DEHYDRATASE-RELATED"/>
    <property type="match status" value="1"/>
</dbReference>
<dbReference type="PANTHER" id="PTHR42805:SF1">
    <property type="entry name" value="PTERIN-4-ALPHA-CARBINOLAMINE DEHYDRATASE-RELATED"/>
    <property type="match status" value="1"/>
</dbReference>
<dbReference type="Pfam" id="PF01329">
    <property type="entry name" value="Pterin_4a"/>
    <property type="match status" value="1"/>
</dbReference>
<dbReference type="SUPFAM" id="SSF55248">
    <property type="entry name" value="PCD-like"/>
    <property type="match status" value="1"/>
</dbReference>
<feature type="chain" id="PRO_0000231466" description="Putative pterin-4-alpha-carbinolamine dehydratase">
    <location>
        <begin position="1"/>
        <end position="118"/>
    </location>
</feature>
<protein>
    <recommendedName>
        <fullName evidence="1">Putative pterin-4-alpha-carbinolamine dehydratase</fullName>
        <shortName evidence="1">PHS</shortName>
        <ecNumber evidence="1">4.2.1.96</ecNumber>
    </recommendedName>
    <alternativeName>
        <fullName evidence="1">4-alpha-hydroxy-tetrahydropterin dehydratase</fullName>
    </alternativeName>
    <alternativeName>
        <fullName evidence="1">Pterin carbinolamine dehydratase</fullName>
        <shortName evidence="1">PCD</shortName>
    </alternativeName>
</protein>
<organism>
    <name type="scientific">Pseudomonas savastanoi pv. phaseolicola (strain 1448A / Race 6)</name>
    <name type="common">Pseudomonas syringae pv. phaseolicola (strain 1448A / Race 6)</name>
    <dbReference type="NCBI Taxonomy" id="264730"/>
    <lineage>
        <taxon>Bacteria</taxon>
        <taxon>Pseudomonadati</taxon>
        <taxon>Pseudomonadota</taxon>
        <taxon>Gammaproteobacteria</taxon>
        <taxon>Pseudomonadales</taxon>
        <taxon>Pseudomonadaceae</taxon>
        <taxon>Pseudomonas</taxon>
    </lineage>
</organism>
<gene>
    <name type="ordered locus">PSPPH_3532</name>
</gene>
<name>PHS_PSE14</name>
<accession>Q48G05</accession>
<reference key="1">
    <citation type="journal article" date="2005" name="J. Bacteriol.">
        <title>Whole-genome sequence analysis of Pseudomonas syringae pv. phaseolicola 1448A reveals divergence among pathovars in genes involved in virulence and transposition.</title>
        <authorList>
            <person name="Joardar V."/>
            <person name="Lindeberg M."/>
            <person name="Jackson R.W."/>
            <person name="Selengut J."/>
            <person name="Dodson R."/>
            <person name="Brinkac L.M."/>
            <person name="Daugherty S.C."/>
            <person name="DeBoy R.T."/>
            <person name="Durkin A.S."/>
            <person name="Gwinn Giglio M."/>
            <person name="Madupu R."/>
            <person name="Nelson W.C."/>
            <person name="Rosovitz M.J."/>
            <person name="Sullivan S.A."/>
            <person name="Crabtree J."/>
            <person name="Creasy T."/>
            <person name="Davidsen T.M."/>
            <person name="Haft D.H."/>
            <person name="Zafar N."/>
            <person name="Zhou L."/>
            <person name="Halpin R."/>
            <person name="Holley T."/>
            <person name="Khouri H.M."/>
            <person name="Feldblyum T.V."/>
            <person name="White O."/>
            <person name="Fraser C.M."/>
            <person name="Chatterjee A.K."/>
            <person name="Cartinhour S."/>
            <person name="Schneider D."/>
            <person name="Mansfield J.W."/>
            <person name="Collmer A."/>
            <person name="Buell R."/>
        </authorList>
    </citation>
    <scope>NUCLEOTIDE SEQUENCE [LARGE SCALE GENOMIC DNA]</scope>
    <source>
        <strain>1448A / Race 6</strain>
    </source>
</reference>
<comment type="catalytic activity">
    <reaction evidence="1">
        <text>(4aS,6R)-4a-hydroxy-L-erythro-5,6,7,8-tetrahydrobiopterin = (6R)-L-erythro-6,7-dihydrobiopterin + H2O</text>
        <dbReference type="Rhea" id="RHEA:11920"/>
        <dbReference type="ChEBI" id="CHEBI:15377"/>
        <dbReference type="ChEBI" id="CHEBI:15642"/>
        <dbReference type="ChEBI" id="CHEBI:43120"/>
        <dbReference type="EC" id="4.2.1.96"/>
    </reaction>
</comment>
<comment type="similarity">
    <text evidence="1">Belongs to the pterin-4-alpha-carbinolamine dehydratase family.</text>
</comment>